<name>SOML_PROAN</name>
<accession>O73847</accession>
<protein>
    <recommendedName>
        <fullName>Somatolactin</fullName>
        <shortName>SL</shortName>
    </recommendedName>
</protein>
<organism>
    <name type="scientific">Protopterus annectens</name>
    <name type="common">African lungfish</name>
    <dbReference type="NCBI Taxonomy" id="7888"/>
    <lineage>
        <taxon>Eukaryota</taxon>
        <taxon>Metazoa</taxon>
        <taxon>Chordata</taxon>
        <taxon>Craniata</taxon>
        <taxon>Vertebrata</taxon>
        <taxon>Euteleostomi</taxon>
        <taxon>Dipnomorpha</taxon>
        <taxon>Ceratodontiformes</taxon>
        <taxon>Lepidosirenoidei</taxon>
        <taxon>Protopteridae</taxon>
        <taxon>Protopterus</taxon>
    </lineage>
</organism>
<reference key="1">
    <citation type="journal article" date="1999" name="Gen. Comp. Endocrinol.">
        <title>Studies on the GH/SL gene family: cloning of African lungfish (Protopterus annectens) growth hormone and somatolactin and toad (Bufo marinus) growth hormone.</title>
        <authorList>
            <person name="May D."/>
            <person name="Alrubaian J."/>
            <person name="Patel S."/>
            <person name="Dores R.M."/>
            <person name="Rand-Weaver M."/>
        </authorList>
    </citation>
    <scope>NUCLEOTIDE SEQUENCE [MRNA]</scope>
    <source>
        <tissue>Pituitary</tissue>
    </source>
</reference>
<reference key="2">
    <citation type="submission" date="1998-09" db="EMBL/GenBank/DDBJ databases">
        <title>African lungfish somatolactin cDNA.</title>
        <authorList>
            <person name="Amemiya Y."/>
            <person name="Takahashi A."/>
            <person name="Kawauchi H."/>
        </authorList>
    </citation>
    <scope>NUCLEOTIDE SEQUENCE [MRNA]</scope>
    <source>
        <tissue>Pituitary</tissue>
    </source>
</reference>
<feature type="signal peptide" evidence="2">
    <location>
        <begin position="1"/>
        <end position="16"/>
    </location>
</feature>
<feature type="chain" id="PRO_0000033073" description="Somatolactin">
    <location>
        <begin position="17"/>
        <end position="232"/>
    </location>
</feature>
<feature type="glycosylation site" description="N-linked (GlcNAc...) asparagine" evidence="2">
    <location>
        <position position="147"/>
    </location>
</feature>
<feature type="disulfide bond" evidence="1">
    <location>
        <begin position="31"/>
        <end position="41"/>
    </location>
</feature>
<feature type="disulfide bond" evidence="1">
    <location>
        <begin position="91"/>
        <end position="206"/>
    </location>
</feature>
<feature type="disulfide bond" evidence="1">
    <location>
        <begin position="223"/>
        <end position="231"/>
    </location>
</feature>
<evidence type="ECO:0000250" key="1"/>
<evidence type="ECO:0000255" key="2"/>
<evidence type="ECO:0000305" key="3"/>
<keyword id="KW-1015">Disulfide bond</keyword>
<keyword id="KW-0325">Glycoprotein</keyword>
<keyword id="KW-0372">Hormone</keyword>
<keyword id="KW-0964">Secreted</keyword>
<keyword id="KW-0732">Signal</keyword>
<dbReference type="EMBL" id="AF062744">
    <property type="protein sequence ID" value="AAC16495.1"/>
    <property type="molecule type" value="mRNA"/>
</dbReference>
<dbReference type="EMBL" id="AB017766">
    <property type="protein sequence ID" value="BAA33422.1"/>
    <property type="molecule type" value="mRNA"/>
</dbReference>
<dbReference type="RefSeq" id="XP_043913351.1">
    <property type="nucleotide sequence ID" value="XM_044057416.1"/>
</dbReference>
<dbReference type="SMR" id="O73847"/>
<dbReference type="GeneID" id="122789916"/>
<dbReference type="OrthoDB" id="9945472at2759"/>
<dbReference type="GO" id="GO:0005615">
    <property type="term" value="C:extracellular space"/>
    <property type="evidence" value="ECO:0007669"/>
    <property type="project" value="TreeGrafter"/>
</dbReference>
<dbReference type="GO" id="GO:0070186">
    <property type="term" value="F:growth hormone activity"/>
    <property type="evidence" value="ECO:0007669"/>
    <property type="project" value="TreeGrafter"/>
</dbReference>
<dbReference type="GO" id="GO:0005131">
    <property type="term" value="F:growth hormone receptor binding"/>
    <property type="evidence" value="ECO:0007669"/>
    <property type="project" value="TreeGrafter"/>
</dbReference>
<dbReference type="GO" id="GO:0048513">
    <property type="term" value="P:animal organ development"/>
    <property type="evidence" value="ECO:0007669"/>
    <property type="project" value="TreeGrafter"/>
</dbReference>
<dbReference type="GO" id="GO:0060396">
    <property type="term" value="P:growth hormone receptor signaling pathway"/>
    <property type="evidence" value="ECO:0007669"/>
    <property type="project" value="TreeGrafter"/>
</dbReference>
<dbReference type="GO" id="GO:0045927">
    <property type="term" value="P:positive regulation of growth"/>
    <property type="evidence" value="ECO:0007669"/>
    <property type="project" value="TreeGrafter"/>
</dbReference>
<dbReference type="GO" id="GO:0046427">
    <property type="term" value="P:positive regulation of receptor signaling pathway via JAK-STAT"/>
    <property type="evidence" value="ECO:0007669"/>
    <property type="project" value="TreeGrafter"/>
</dbReference>
<dbReference type="GO" id="GO:0031667">
    <property type="term" value="P:response to nutrient levels"/>
    <property type="evidence" value="ECO:0007669"/>
    <property type="project" value="TreeGrafter"/>
</dbReference>
<dbReference type="Gene3D" id="1.20.1250.10">
    <property type="match status" value="1"/>
</dbReference>
<dbReference type="InterPro" id="IPR009079">
    <property type="entry name" value="4_helix_cytokine-like_core"/>
</dbReference>
<dbReference type="InterPro" id="IPR001400">
    <property type="entry name" value="Somatotropin/Prolactin"/>
</dbReference>
<dbReference type="InterPro" id="IPR018116">
    <property type="entry name" value="Somatotropin_CS"/>
</dbReference>
<dbReference type="PANTHER" id="PTHR11417:SF3">
    <property type="entry name" value="SOMATOLACTIN ALPHA ISOFORM X1-RELATED"/>
    <property type="match status" value="1"/>
</dbReference>
<dbReference type="PANTHER" id="PTHR11417">
    <property type="entry name" value="SOMATOTROPIN,PROLACTIN"/>
    <property type="match status" value="1"/>
</dbReference>
<dbReference type="Pfam" id="PF00103">
    <property type="entry name" value="Hormone_1"/>
    <property type="match status" value="1"/>
</dbReference>
<dbReference type="PRINTS" id="PR00836">
    <property type="entry name" value="SOMATOTROPIN"/>
</dbReference>
<dbReference type="SUPFAM" id="SSF47266">
    <property type="entry name" value="4-helical cytokines"/>
    <property type="match status" value="1"/>
</dbReference>
<dbReference type="PROSITE" id="PS00266">
    <property type="entry name" value="SOMATOTROPIN_1"/>
    <property type="match status" value="1"/>
</dbReference>
<dbReference type="PROSITE" id="PS00338">
    <property type="entry name" value="SOMATOTROPIN_2"/>
    <property type="match status" value="1"/>
</dbReference>
<comment type="subcellular location">
    <subcellularLocation>
        <location>Secreted</location>
    </subcellularLocation>
</comment>
<comment type="tissue specificity">
    <text>Pituitary gland.</text>
</comment>
<comment type="similarity">
    <text evidence="3">Belongs to the somatotropin/prolactin family.</text>
</comment>
<proteinExistence type="evidence at transcript level"/>
<sequence>MHNWKGVWLCSLFLTFGQLWNGILLAYPLDCKDEQGSYTRCTSISLEKLLDRAIQHAELLYRVSEESCTIFEDNFAPFSLVSQRSRNFNSCYTKGLRLPSSKSEAQQVSDKWLLHSVLVLVQSWIEPFVYLQRTLDTYNSLPGSLVNKTKWVSDKLPSLEQGIVVLIRKMLHEGLITTDFQQSVIEIEPSPEITDSSARDYMILNCFRKDAHKMETFLKLLKCRQIKKLNCY</sequence>